<keyword id="KW-0217">Developmental protein</keyword>
<keyword id="KW-0238">DNA-binding</keyword>
<keyword id="KW-0524">Neurogenesis</keyword>
<keyword id="KW-0539">Nucleus</keyword>
<keyword id="KW-1185">Reference proteome</keyword>
<keyword id="KW-0804">Transcription</keyword>
<keyword id="KW-0805">Transcription regulation</keyword>
<accession>Q8K3Q3</accession>
<accession>Q0VGP0</accession>
<accession>Q920C0</accession>
<sequence>MIESGIWSRMSEMIRSSGHSHHCSPQEYRFLPPVGDDDLPGDLQSLSWLTAVDVPRLQQMANGRIDLGSSGVTHPHPGALAGTADLHVGAAPRPLLRRSQTAVVPRGVLGLSPIGNHRASAEQMNQFPAGGQASSGLQEMPQLYSPATQIPFPLPLGSQQCPPAGLYGSPFSARPSYPQAHGAMHASQEPHPKHYPKPIYSYSCLIAMALKNSKTGSLPVSEIYSFMKEHFPYFKTAPDGWKNSVRHNLSLNKCFEKVETKSSGSSRKGCLWALNLARIDKMEEEMHKWKRKDLAAIHRSMANPEELDKLISDRPESCRRPGKRGEPKAPMLTHATTVAMAHSCLAISQLPPKPLMTLSLQSVPLHHQLQPQAHLAPDSPAPAQTPPLHALPSLSPGPLPQPAMGRVPGDFLNINSDMNTEVDALDPSIMDFALQGNLWEEMKEDSFSLDTLEAFGDSPLGCDLGAPSLTPVSGNSDQSFPDVQVTGLYAAYSTAADGVAPSAANSAQYLGTPGNKPIALL</sequence>
<protein>
    <recommendedName>
        <fullName>Forkhead box protein N4</fullName>
    </recommendedName>
</protein>
<comment type="function">
    <text evidence="3 4 5 6 7 8">Transcription factor essential for neural and some non-neural tissues development, such as retina and lung respectively. Binds to an 11-bp consensus sequence containing the invariant tetranucleotide 5'-ACGC-3'. During development of the central nervous system, is required to specify the amacrine and horizontal cell fates from multipotent retinal progenitors while suppressing the alternative photoreceptor cell fates through activating DLL4-NOTCH signaling. Also acts synergistically with ASCL1/MASH1 to activate DLL4-NOTCH signaling and drive commitment of p2 progenitors to the V2b interneuron fates during spinal cord neurogenesis. In development of non-neural tissues, plays an essential role in the specification of the atrioventricular canal and is indirectly required for patterning the distal airway during lung development.</text>
</comment>
<comment type="subcellular location">
    <subcellularLocation>
        <location evidence="1 7">Nucleus</location>
    </subcellularLocation>
</comment>
<comment type="tissue specificity">
    <text evidence="3 4 6">Mainly expressed in proliferator progenitor cells in brain and retina rather than differentiated cells. In contrast, is expressed only in postmitotic epithelial cells rather than in proliferative progenitors in the proximal airway.</text>
</comment>
<comment type="developmental stage">
    <text evidence="3 4 5 6 9">Expressed in both neural and non-neural tissues of the embryo. In the nervous system, its expression is detected only in a few selected central nervous system tissues including the midbrain, hindbrain, spinal cord and retina while absent from the peripheral nervous system. At about 9.5 dpc-10.5 dpc, commences its expression in the dorsal mesenphalon, ventral rhombencephalon and ventral spinal cord. In the spinal cord, is found in p2 progenitor cells but not in mature V2a and V2b cells, in other interneuron subtypes or in motoneurons. The expression in the brain and spinal cord becomes weak at 12.5 dpc and disappears by 13.5 dpc. In the central eye, expression starts in the central retina at 11.5 dpc, then gradually becomes abundant in the entire retinal outer neuroblastic layer by 13.5 dpc, but is absent from the inner neuroblastic layer. Starting from P1 and by P7, the expression in the retina gradually disappears from the center to the periphery. In airway system, expression turns on at 14.5 dpc in a small set of cells in the epithelia of the trachea and esophagus, then spreads to the epithelia of bronchi and bronchioles by 15.5 dpc, the expression persists until at least P8 (at protein level).</text>
</comment>
<comment type="disruption phenotype">
    <text evidence="3 4 6">Animals display early postnatal lethality, while survivors exhibit noticeable body size reduction starting at P8. At P8 and P20, retinas are reduced in thickness with the inner nuclear layer, inner plexiform layer and ganglion cell layer much thinner than in wild type and lack horizontal cells as well as amacrine cells. In lungs, mutants show dilated alveoli with thin walls.</text>
</comment>
<dbReference type="EMBL" id="AY039039">
    <property type="protein sequence ID" value="AAK72101.1"/>
    <property type="molecule type" value="mRNA"/>
</dbReference>
<dbReference type="EMBL" id="AF323488">
    <property type="protein sequence ID" value="AAL06288.1"/>
    <property type="molecule type" value="mRNA"/>
</dbReference>
<dbReference type="EMBL" id="BC092242">
    <property type="protein sequence ID" value="AAH92242.1"/>
    <property type="molecule type" value="mRNA"/>
</dbReference>
<dbReference type="EMBL" id="BC130222">
    <property type="protein sequence ID" value="AAI30223.1"/>
    <property type="molecule type" value="mRNA"/>
</dbReference>
<dbReference type="CCDS" id="CCDS19562.1"/>
<dbReference type="RefSeq" id="NP_683737.2">
    <property type="nucleotide sequence ID" value="NM_148935.2"/>
</dbReference>
<dbReference type="RefSeq" id="XP_006530184.1">
    <property type="nucleotide sequence ID" value="XM_006530121.5"/>
</dbReference>
<dbReference type="SMR" id="Q8K3Q3"/>
<dbReference type="FunCoup" id="Q8K3Q3">
    <property type="interactions" value="1046"/>
</dbReference>
<dbReference type="STRING" id="10090.ENSMUSP00000047951"/>
<dbReference type="iPTMnet" id="Q8K3Q3"/>
<dbReference type="PhosphoSitePlus" id="Q8K3Q3"/>
<dbReference type="PaxDb" id="10090-ENSMUSP00000047951"/>
<dbReference type="ProteomicsDB" id="267402"/>
<dbReference type="Pumba" id="Q8K3Q3"/>
<dbReference type="Antibodypedia" id="30846">
    <property type="antibodies" value="190 antibodies from 24 providers"/>
</dbReference>
<dbReference type="DNASU" id="116810"/>
<dbReference type="Ensembl" id="ENSMUST00000044790.12">
    <property type="protein sequence ID" value="ENSMUSP00000047951.6"/>
    <property type="gene ID" value="ENSMUSG00000042002.12"/>
</dbReference>
<dbReference type="GeneID" id="116810"/>
<dbReference type="KEGG" id="mmu:116810"/>
<dbReference type="UCSC" id="uc008yzk.1">
    <property type="organism name" value="mouse"/>
</dbReference>
<dbReference type="AGR" id="MGI:2151057"/>
<dbReference type="CTD" id="121643"/>
<dbReference type="MGI" id="MGI:2151057">
    <property type="gene designation" value="Foxn4"/>
</dbReference>
<dbReference type="VEuPathDB" id="HostDB:ENSMUSG00000042002"/>
<dbReference type="eggNOG" id="KOG2294">
    <property type="taxonomic scope" value="Eukaryota"/>
</dbReference>
<dbReference type="GeneTree" id="ENSGT00940000158984"/>
<dbReference type="HOGENOM" id="CLU_031768_2_0_1"/>
<dbReference type="InParanoid" id="Q8K3Q3"/>
<dbReference type="OMA" id="QCPTSVY"/>
<dbReference type="OrthoDB" id="10070006at2759"/>
<dbReference type="PhylomeDB" id="Q8K3Q3"/>
<dbReference type="TreeFam" id="TF329867"/>
<dbReference type="BioGRID-ORCS" id="116810">
    <property type="hits" value="5 hits in 80 CRISPR screens"/>
</dbReference>
<dbReference type="PRO" id="PR:Q8K3Q3"/>
<dbReference type="Proteomes" id="UP000000589">
    <property type="component" value="Chromosome 5"/>
</dbReference>
<dbReference type="RNAct" id="Q8K3Q3">
    <property type="molecule type" value="protein"/>
</dbReference>
<dbReference type="Bgee" id="ENSMUSG00000042002">
    <property type="expression patterns" value="Expressed in mesodermal cell in embryo and 56 other cell types or tissues"/>
</dbReference>
<dbReference type="ExpressionAtlas" id="Q8K3Q3">
    <property type="expression patterns" value="baseline and differential"/>
</dbReference>
<dbReference type="GO" id="GO:0005634">
    <property type="term" value="C:nucleus"/>
    <property type="evidence" value="ECO:0000314"/>
    <property type="project" value="UniProtKB"/>
</dbReference>
<dbReference type="GO" id="GO:0003682">
    <property type="term" value="F:chromatin binding"/>
    <property type="evidence" value="ECO:0000314"/>
    <property type="project" value="UniProtKB"/>
</dbReference>
<dbReference type="GO" id="GO:0000987">
    <property type="term" value="F:cis-regulatory region sequence-specific DNA binding"/>
    <property type="evidence" value="ECO:0000314"/>
    <property type="project" value="UniProtKB"/>
</dbReference>
<dbReference type="GO" id="GO:0000981">
    <property type="term" value="F:DNA-binding transcription factor activity, RNA polymerase II-specific"/>
    <property type="evidence" value="ECO:0000314"/>
    <property type="project" value="GO_Central"/>
</dbReference>
<dbReference type="GO" id="GO:0035881">
    <property type="term" value="P:amacrine cell differentiation"/>
    <property type="evidence" value="ECO:0000315"/>
    <property type="project" value="UniProtKB"/>
</dbReference>
<dbReference type="GO" id="GO:0036302">
    <property type="term" value="P:atrioventricular canal development"/>
    <property type="evidence" value="ECO:0000250"/>
    <property type="project" value="UniProtKB"/>
</dbReference>
<dbReference type="GO" id="GO:0001947">
    <property type="term" value="P:heart looping"/>
    <property type="evidence" value="ECO:0000250"/>
    <property type="project" value="UniProtKB"/>
</dbReference>
<dbReference type="GO" id="GO:0048663">
    <property type="term" value="P:neuron fate commitment"/>
    <property type="evidence" value="ECO:0000316"/>
    <property type="project" value="MGI"/>
</dbReference>
<dbReference type="GO" id="GO:0045944">
    <property type="term" value="P:positive regulation of transcription by RNA polymerase II"/>
    <property type="evidence" value="ECO:0000314"/>
    <property type="project" value="GO_Central"/>
</dbReference>
<dbReference type="GO" id="GO:0006355">
    <property type="term" value="P:regulation of DNA-templated transcription"/>
    <property type="evidence" value="ECO:0000314"/>
    <property type="project" value="UniProtKB"/>
</dbReference>
<dbReference type="GO" id="GO:0008016">
    <property type="term" value="P:regulation of heart contraction"/>
    <property type="evidence" value="ECO:0000250"/>
    <property type="project" value="UniProtKB"/>
</dbReference>
<dbReference type="GO" id="GO:0010842">
    <property type="term" value="P:retina layer formation"/>
    <property type="evidence" value="ECO:0000315"/>
    <property type="project" value="UniProtKB"/>
</dbReference>
<dbReference type="GO" id="GO:0021514">
    <property type="term" value="P:ventral spinal cord interneuron differentiation"/>
    <property type="evidence" value="ECO:0000315"/>
    <property type="project" value="UniProtKB"/>
</dbReference>
<dbReference type="GO" id="GO:0060579">
    <property type="term" value="P:ventral spinal cord interneuron fate commitment"/>
    <property type="evidence" value="ECO:0000315"/>
    <property type="project" value="UniProtKB"/>
</dbReference>
<dbReference type="FunFam" id="1.10.10.10:FF:000122">
    <property type="entry name" value="Forkhead box protein N1"/>
    <property type="match status" value="1"/>
</dbReference>
<dbReference type="Gene3D" id="1.10.10.10">
    <property type="entry name" value="Winged helix-like DNA-binding domain superfamily/Winged helix DNA-binding domain"/>
    <property type="match status" value="1"/>
</dbReference>
<dbReference type="InterPro" id="IPR001766">
    <property type="entry name" value="Fork_head_dom"/>
</dbReference>
<dbReference type="InterPro" id="IPR049624">
    <property type="entry name" value="FOXN1_4"/>
</dbReference>
<dbReference type="InterPro" id="IPR030456">
    <property type="entry name" value="TF_fork_head_CS_2"/>
</dbReference>
<dbReference type="InterPro" id="IPR036388">
    <property type="entry name" value="WH-like_DNA-bd_sf"/>
</dbReference>
<dbReference type="InterPro" id="IPR036390">
    <property type="entry name" value="WH_DNA-bd_sf"/>
</dbReference>
<dbReference type="PANTHER" id="PTHR46721">
    <property type="entry name" value="FORKHEAD BOX PROTEIN N1"/>
    <property type="match status" value="1"/>
</dbReference>
<dbReference type="PANTHER" id="PTHR46721:SF2">
    <property type="entry name" value="FORKHEAD BOX PROTEIN N4"/>
    <property type="match status" value="1"/>
</dbReference>
<dbReference type="Pfam" id="PF00250">
    <property type="entry name" value="Forkhead"/>
    <property type="match status" value="1"/>
</dbReference>
<dbReference type="PRINTS" id="PR00053">
    <property type="entry name" value="FORKHEAD"/>
</dbReference>
<dbReference type="SMART" id="SM00339">
    <property type="entry name" value="FH"/>
    <property type="match status" value="1"/>
</dbReference>
<dbReference type="SUPFAM" id="SSF46785">
    <property type="entry name" value="Winged helix' DNA-binding domain"/>
    <property type="match status" value="1"/>
</dbReference>
<dbReference type="PROSITE" id="PS00658">
    <property type="entry name" value="FORK_HEAD_2"/>
    <property type="match status" value="1"/>
</dbReference>
<dbReference type="PROSITE" id="PS50039">
    <property type="entry name" value="FORK_HEAD_3"/>
    <property type="match status" value="1"/>
</dbReference>
<proteinExistence type="evidence at protein level"/>
<gene>
    <name type="primary">Foxn4</name>
</gene>
<reference key="1">
    <citation type="submission" date="2001-06" db="EMBL/GenBank/DDBJ databases">
        <title>Cloning of mouse FoxN4, a predicted forkhead/winged-helix transcription factor.</title>
        <authorList>
            <person name="Visel A."/>
            <person name="Eichele G."/>
        </authorList>
    </citation>
    <scope>NUCLEOTIDE SEQUENCE [MRNA]</scope>
    <scope>DEVELOPMENTAL STAGE</scope>
</reference>
<reference key="2">
    <citation type="journal article" date="2001" name="Mech. Dev.">
        <title>Foxn4 - a new member of the forkhead gene family is expressed in the retina.</title>
        <authorList>
            <person name="Gouge A."/>
            <person name="Holt J."/>
            <person name="Hardy A.P."/>
            <person name="Sowden J.C."/>
            <person name="Smith H.K."/>
        </authorList>
    </citation>
    <scope>NUCLEOTIDE SEQUENCE [MRNA]</scope>
    <source>
        <tissue>Eye</tissue>
    </source>
</reference>
<reference key="3">
    <citation type="journal article" date="2004" name="Genome Res.">
        <title>The status, quality, and expansion of the NIH full-length cDNA project: the Mammalian Gene Collection (MGC).</title>
        <authorList>
            <consortium name="The MGC Project Team"/>
        </authorList>
    </citation>
    <scope>NUCLEOTIDE SEQUENCE [LARGE SCALE MRNA]</scope>
</reference>
<reference key="4">
    <citation type="journal article" date="2004" name="Neuron">
        <title>Foxn4 controls the genesis of amacrine and horizontal cells by retinal progenitors.</title>
        <authorList>
            <person name="Li S."/>
            <person name="Mo Z."/>
            <person name="Yang X."/>
            <person name="Price S.M."/>
            <person name="Shen M.M."/>
            <person name="Xiang M."/>
        </authorList>
    </citation>
    <scope>FUNCTION IN RETINA DEVELOPMENT</scope>
    <scope>DISRUPTION PHENOTYPE</scope>
    <scope>DEVELOPMENTAL STAGE</scope>
    <scope>TISSUE SPECIFICITY</scope>
</reference>
<reference key="5">
    <citation type="journal article" date="2005" name="Proc. Natl. Acad. Sci. U.S.A.">
        <title>Foxn4 acts synergistically with Mash1 to specify subtype identity of V2 interneurons in the spinal cord.</title>
        <authorList>
            <person name="Li S."/>
            <person name="Misra K."/>
            <person name="Matise M.P."/>
            <person name="Xiang M."/>
        </authorList>
    </citation>
    <scope>FUNCTION IN NEUROGENESIS</scope>
    <scope>DEVELOPMENTAL STAGE</scope>
    <scope>TISSUE SPECIFICITY</scope>
    <scope>DISRUPTION PHENOTYPE</scope>
</reference>
<reference key="6">
    <citation type="journal article" date="2007" name="Development">
        <title>A regulatory network involving Foxn4, Mash1 and delta-like 4/Notch1 generates V2a and V2b spinal interneurons from a common progenitor pool.</title>
        <authorList>
            <person name="Del Barrio M.G."/>
            <person name="Taveira-Marques R."/>
            <person name="Muroyama Y."/>
            <person name="Yuk D.I."/>
            <person name="Li S."/>
            <person name="Wines-Samuelson M."/>
            <person name="Shen J."/>
            <person name="Smith H.K."/>
            <person name="Xiang M."/>
            <person name="Rowitch D."/>
            <person name="Richardson W.D."/>
        </authorList>
    </citation>
    <scope>FUNCTION IN NEUROGENESIS</scope>
    <scope>DEVELOPMENTAL STAGE</scope>
</reference>
<reference key="7">
    <citation type="journal article" date="2011" name="Dev. Dyn.">
        <title>Foxn4 influences alveologenesis during lung development.</title>
        <authorList>
            <person name="Li S."/>
            <person name="Xiang M."/>
        </authorList>
    </citation>
    <scope>FUNCTION IN LUNG DEVELOPMENT</scope>
    <scope>TISSUE SPECIFICITY</scope>
    <scope>DISRUPTION PHENOTYPE</scope>
    <scope>DEVELOPMENTAL STAGE</scope>
</reference>
<reference key="8">
    <citation type="journal article" date="2012" name="Proc. Natl. Acad. Sci. U.S.A.">
        <title>Forkhead box N4 (Foxn4) activates Dll4-Notch signaling to suppress photoreceptor cell fates of early retinal progenitors.</title>
        <authorList>
            <person name="Luo H."/>
            <person name="Jin K."/>
            <person name="Xie Z."/>
            <person name="Qiu F."/>
            <person name="Li S."/>
            <person name="Zou M."/>
            <person name="Cai L."/>
            <person name="Hozumi K."/>
            <person name="Shima D.T."/>
            <person name="Xiang M."/>
        </authorList>
    </citation>
    <scope>FUNCTION AS TRANSCRIPTION FACTOR</scope>
    <scope>SUBCELLULAR LOCATION</scope>
</reference>
<reference key="9">
    <citation type="journal article" date="2013" name="Nat. Commun.">
        <title>An isoform of retinoid-related orphan receptor beta directs differentiation of retinal amacrine and horizontal interneurons.</title>
        <authorList>
            <person name="Liu H."/>
            <person name="Kim S.Y."/>
            <person name="Fu Y."/>
            <person name="Wu X."/>
            <person name="Ng L."/>
            <person name="Swaroop A."/>
            <person name="Forrest D."/>
        </authorList>
    </citation>
    <scope>FUNCTION AS TRANSCRIPTION FACTOR</scope>
    <scope>DNA-BINDING</scope>
</reference>
<name>FOXN4_MOUSE</name>
<evidence type="ECO:0000255" key="1">
    <source>
        <dbReference type="PROSITE-ProRule" id="PRU00089"/>
    </source>
</evidence>
<evidence type="ECO:0000256" key="2">
    <source>
        <dbReference type="SAM" id="MobiDB-lite"/>
    </source>
</evidence>
<evidence type="ECO:0000269" key="3">
    <source>
    </source>
</evidence>
<evidence type="ECO:0000269" key="4">
    <source>
    </source>
</evidence>
<evidence type="ECO:0000269" key="5">
    <source>
    </source>
</evidence>
<evidence type="ECO:0000269" key="6">
    <source>
    </source>
</evidence>
<evidence type="ECO:0000269" key="7">
    <source>
    </source>
</evidence>
<evidence type="ECO:0000269" key="8">
    <source>
    </source>
</evidence>
<evidence type="ECO:0000269" key="9">
    <source ref="1"/>
</evidence>
<evidence type="ECO:0000305" key="10"/>
<feature type="chain" id="PRO_0000091871" description="Forkhead box protein N4">
    <location>
        <begin position="1"/>
        <end position="521"/>
    </location>
</feature>
<feature type="DNA-binding region" description="Fork-head" evidence="1">
    <location>
        <begin position="197"/>
        <end position="293"/>
    </location>
</feature>
<feature type="region of interest" description="Disordered" evidence="2">
    <location>
        <begin position="371"/>
        <end position="406"/>
    </location>
</feature>
<feature type="sequence conflict" description="In Ref. 2; AAL06288." evidence="10" ref="2">
    <original>S</original>
    <variation>G</variation>
    <location>
        <position position="16"/>
    </location>
</feature>
<feature type="sequence conflict" description="In Ref. 2; AAL06288." evidence="10" ref="2">
    <original>L</original>
    <variation>C</variation>
    <location>
        <position position="218"/>
    </location>
</feature>
<feature type="sequence conflict" description="In Ref. 2; AAL06288." evidence="10" ref="2">
    <original>EHF</original>
    <variation>TL</variation>
    <location>
        <begin position="229"/>
        <end position="231"/>
    </location>
</feature>
<feature type="sequence conflict" description="In Ref. 2; AAL06288." evidence="10" ref="2">
    <original>A</original>
    <variation>S</variation>
    <location>
        <position position="296"/>
    </location>
</feature>
<feature type="sequence conflict" description="In Ref. 2; AAL06288." evidence="10" ref="2">
    <original>KL</original>
    <variation>NV</variation>
    <location>
        <begin position="309"/>
        <end position="310"/>
    </location>
</feature>
<feature type="sequence conflict" description="In Ref. 2; AAL06288." evidence="10" ref="2">
    <original>PAMGRVPGDFLNIN</original>
    <variation>QHGRSWDFSHH</variation>
    <location>
        <begin position="402"/>
        <end position="415"/>
    </location>
</feature>
<organism>
    <name type="scientific">Mus musculus</name>
    <name type="common">Mouse</name>
    <dbReference type="NCBI Taxonomy" id="10090"/>
    <lineage>
        <taxon>Eukaryota</taxon>
        <taxon>Metazoa</taxon>
        <taxon>Chordata</taxon>
        <taxon>Craniata</taxon>
        <taxon>Vertebrata</taxon>
        <taxon>Euteleostomi</taxon>
        <taxon>Mammalia</taxon>
        <taxon>Eutheria</taxon>
        <taxon>Euarchontoglires</taxon>
        <taxon>Glires</taxon>
        <taxon>Rodentia</taxon>
        <taxon>Myomorpha</taxon>
        <taxon>Muroidea</taxon>
        <taxon>Muridae</taxon>
        <taxon>Murinae</taxon>
        <taxon>Mus</taxon>
        <taxon>Mus</taxon>
    </lineage>
</organism>